<organism>
    <name type="scientific">Yersinia pseudotuberculosis serotype I (strain IP32953)</name>
    <dbReference type="NCBI Taxonomy" id="273123"/>
    <lineage>
        <taxon>Bacteria</taxon>
        <taxon>Pseudomonadati</taxon>
        <taxon>Pseudomonadota</taxon>
        <taxon>Gammaproteobacteria</taxon>
        <taxon>Enterobacterales</taxon>
        <taxon>Yersiniaceae</taxon>
        <taxon>Yersinia</taxon>
    </lineage>
</organism>
<dbReference type="EC" id="4.2.3.4" evidence="1"/>
<dbReference type="EMBL" id="BX936398">
    <property type="protein sequence ID" value="CAH22987.1"/>
    <property type="molecule type" value="Genomic_DNA"/>
</dbReference>
<dbReference type="RefSeq" id="WP_002208898.1">
    <property type="nucleotide sequence ID" value="NZ_CP009712.1"/>
</dbReference>
<dbReference type="SMR" id="Q664M0"/>
<dbReference type="GeneID" id="57974449"/>
<dbReference type="KEGG" id="ypo:BZ17_2837"/>
<dbReference type="KEGG" id="yps:YPTB3749"/>
<dbReference type="PATRIC" id="fig|273123.14.peg.2977"/>
<dbReference type="UniPathway" id="UPA00053">
    <property type="reaction ID" value="UER00085"/>
</dbReference>
<dbReference type="Proteomes" id="UP000001011">
    <property type="component" value="Chromosome"/>
</dbReference>
<dbReference type="GO" id="GO:0005737">
    <property type="term" value="C:cytoplasm"/>
    <property type="evidence" value="ECO:0007669"/>
    <property type="project" value="UniProtKB-SubCell"/>
</dbReference>
<dbReference type="GO" id="GO:0003856">
    <property type="term" value="F:3-dehydroquinate synthase activity"/>
    <property type="evidence" value="ECO:0007669"/>
    <property type="project" value="UniProtKB-UniRule"/>
</dbReference>
<dbReference type="GO" id="GO:0046872">
    <property type="term" value="F:metal ion binding"/>
    <property type="evidence" value="ECO:0007669"/>
    <property type="project" value="UniProtKB-KW"/>
</dbReference>
<dbReference type="GO" id="GO:0000166">
    <property type="term" value="F:nucleotide binding"/>
    <property type="evidence" value="ECO:0007669"/>
    <property type="project" value="UniProtKB-KW"/>
</dbReference>
<dbReference type="GO" id="GO:0008652">
    <property type="term" value="P:amino acid biosynthetic process"/>
    <property type="evidence" value="ECO:0007669"/>
    <property type="project" value="UniProtKB-KW"/>
</dbReference>
<dbReference type="GO" id="GO:0009073">
    <property type="term" value="P:aromatic amino acid family biosynthetic process"/>
    <property type="evidence" value="ECO:0007669"/>
    <property type="project" value="UniProtKB-KW"/>
</dbReference>
<dbReference type="GO" id="GO:0009423">
    <property type="term" value="P:chorismate biosynthetic process"/>
    <property type="evidence" value="ECO:0007669"/>
    <property type="project" value="UniProtKB-UniRule"/>
</dbReference>
<dbReference type="CDD" id="cd08195">
    <property type="entry name" value="DHQS"/>
    <property type="match status" value="1"/>
</dbReference>
<dbReference type="FunFam" id="1.20.1090.10:FF:000002">
    <property type="entry name" value="3-dehydroquinate synthase"/>
    <property type="match status" value="1"/>
</dbReference>
<dbReference type="FunFam" id="3.40.50.1970:FF:000001">
    <property type="entry name" value="3-dehydroquinate synthase"/>
    <property type="match status" value="1"/>
</dbReference>
<dbReference type="Gene3D" id="3.40.50.1970">
    <property type="match status" value="1"/>
</dbReference>
<dbReference type="Gene3D" id="1.20.1090.10">
    <property type="entry name" value="Dehydroquinate synthase-like - alpha domain"/>
    <property type="match status" value="1"/>
</dbReference>
<dbReference type="HAMAP" id="MF_00110">
    <property type="entry name" value="DHQ_synthase"/>
    <property type="match status" value="1"/>
</dbReference>
<dbReference type="InterPro" id="IPR050071">
    <property type="entry name" value="Dehydroquinate_synthase"/>
</dbReference>
<dbReference type="InterPro" id="IPR016037">
    <property type="entry name" value="DHQ_synth_AroB"/>
</dbReference>
<dbReference type="InterPro" id="IPR030963">
    <property type="entry name" value="DHQ_synth_fam"/>
</dbReference>
<dbReference type="InterPro" id="IPR030960">
    <property type="entry name" value="DHQS/DOIS_N"/>
</dbReference>
<dbReference type="InterPro" id="IPR056179">
    <property type="entry name" value="DHQS_C"/>
</dbReference>
<dbReference type="NCBIfam" id="TIGR01357">
    <property type="entry name" value="aroB"/>
    <property type="match status" value="1"/>
</dbReference>
<dbReference type="PANTHER" id="PTHR43622">
    <property type="entry name" value="3-DEHYDROQUINATE SYNTHASE"/>
    <property type="match status" value="1"/>
</dbReference>
<dbReference type="PANTHER" id="PTHR43622:SF7">
    <property type="entry name" value="3-DEHYDROQUINATE SYNTHASE, CHLOROPLASTIC"/>
    <property type="match status" value="1"/>
</dbReference>
<dbReference type="Pfam" id="PF01761">
    <property type="entry name" value="DHQ_synthase"/>
    <property type="match status" value="1"/>
</dbReference>
<dbReference type="Pfam" id="PF24621">
    <property type="entry name" value="DHQS_C"/>
    <property type="match status" value="1"/>
</dbReference>
<dbReference type="PIRSF" id="PIRSF001455">
    <property type="entry name" value="DHQ_synth"/>
    <property type="match status" value="1"/>
</dbReference>
<dbReference type="SUPFAM" id="SSF56796">
    <property type="entry name" value="Dehydroquinate synthase-like"/>
    <property type="match status" value="1"/>
</dbReference>
<gene>
    <name evidence="1" type="primary">aroB</name>
    <name type="ordered locus">YPTB3749</name>
</gene>
<comment type="function">
    <text evidence="1">Catalyzes the conversion of 3-deoxy-D-arabino-heptulosonate 7-phosphate (DAHP) to dehydroquinate (DHQ).</text>
</comment>
<comment type="catalytic activity">
    <reaction evidence="1">
        <text>7-phospho-2-dehydro-3-deoxy-D-arabino-heptonate = 3-dehydroquinate + phosphate</text>
        <dbReference type="Rhea" id="RHEA:21968"/>
        <dbReference type="ChEBI" id="CHEBI:32364"/>
        <dbReference type="ChEBI" id="CHEBI:43474"/>
        <dbReference type="ChEBI" id="CHEBI:58394"/>
        <dbReference type="EC" id="4.2.3.4"/>
    </reaction>
</comment>
<comment type="cofactor">
    <cofactor evidence="1">
        <name>Co(2+)</name>
        <dbReference type="ChEBI" id="CHEBI:48828"/>
    </cofactor>
    <cofactor evidence="1">
        <name>Zn(2+)</name>
        <dbReference type="ChEBI" id="CHEBI:29105"/>
    </cofactor>
    <text evidence="1">Binds 1 divalent metal cation per subunit. Can use either Co(2+) or Zn(2+).</text>
</comment>
<comment type="cofactor">
    <cofactor evidence="1">
        <name>NAD(+)</name>
        <dbReference type="ChEBI" id="CHEBI:57540"/>
    </cofactor>
</comment>
<comment type="pathway">
    <text evidence="1">Metabolic intermediate biosynthesis; chorismate biosynthesis; chorismate from D-erythrose 4-phosphate and phosphoenolpyruvate: step 2/7.</text>
</comment>
<comment type="subcellular location">
    <subcellularLocation>
        <location evidence="1">Cytoplasm</location>
    </subcellularLocation>
</comment>
<comment type="similarity">
    <text evidence="1">Belongs to the sugar phosphate cyclases superfamily. Dehydroquinate synthase family.</text>
</comment>
<proteinExistence type="inferred from homology"/>
<name>AROB_YERPS</name>
<protein>
    <recommendedName>
        <fullName evidence="1">3-dehydroquinate synthase</fullName>
        <shortName evidence="1">DHQS</shortName>
        <ecNumber evidence="1">4.2.3.4</ecNumber>
    </recommendedName>
</protein>
<evidence type="ECO:0000255" key="1">
    <source>
        <dbReference type="HAMAP-Rule" id="MF_00110"/>
    </source>
</evidence>
<feature type="chain" id="PRO_0000231146" description="3-dehydroquinate synthase">
    <location>
        <begin position="1"/>
        <end position="362"/>
    </location>
</feature>
<feature type="binding site" evidence="1">
    <location>
        <begin position="71"/>
        <end position="76"/>
    </location>
    <ligand>
        <name>NAD(+)</name>
        <dbReference type="ChEBI" id="CHEBI:57540"/>
    </ligand>
</feature>
<feature type="binding site" evidence="1">
    <location>
        <begin position="105"/>
        <end position="109"/>
    </location>
    <ligand>
        <name>NAD(+)</name>
        <dbReference type="ChEBI" id="CHEBI:57540"/>
    </ligand>
</feature>
<feature type="binding site" evidence="1">
    <location>
        <begin position="129"/>
        <end position="130"/>
    </location>
    <ligand>
        <name>NAD(+)</name>
        <dbReference type="ChEBI" id="CHEBI:57540"/>
    </ligand>
</feature>
<feature type="binding site" evidence="1">
    <location>
        <position position="142"/>
    </location>
    <ligand>
        <name>NAD(+)</name>
        <dbReference type="ChEBI" id="CHEBI:57540"/>
    </ligand>
</feature>
<feature type="binding site" evidence="1">
    <location>
        <position position="151"/>
    </location>
    <ligand>
        <name>NAD(+)</name>
        <dbReference type="ChEBI" id="CHEBI:57540"/>
    </ligand>
</feature>
<feature type="binding site" evidence="1">
    <location>
        <begin position="169"/>
        <end position="172"/>
    </location>
    <ligand>
        <name>NAD(+)</name>
        <dbReference type="ChEBI" id="CHEBI:57540"/>
    </ligand>
</feature>
<feature type="binding site" evidence="1">
    <location>
        <position position="184"/>
    </location>
    <ligand>
        <name>Zn(2+)</name>
        <dbReference type="ChEBI" id="CHEBI:29105"/>
    </ligand>
</feature>
<feature type="binding site" evidence="1">
    <location>
        <position position="248"/>
    </location>
    <ligand>
        <name>Zn(2+)</name>
        <dbReference type="ChEBI" id="CHEBI:29105"/>
    </ligand>
</feature>
<feature type="binding site" evidence="1">
    <location>
        <position position="265"/>
    </location>
    <ligand>
        <name>Zn(2+)</name>
        <dbReference type="ChEBI" id="CHEBI:29105"/>
    </ligand>
</feature>
<sequence>MEKITVTLGERSYPITIAAGLFNDPASFKPLKAGDQVMLVTNQTLAPLYLDSLRAVLEHGGIKVDQVILPDGEQYKSLSVMEQVFSALLEKPHGRDTTLVALGGGVVGDLTGFAAACYQRGVRFIQVPTTLLSQVDSSVGGKTAVNHPLGKNMIGAFYQPASVVVDLNCLKTLPPRELASGLAEVIKYGIILDAAFFDWLENNIDALLALDMSALAYCIRRCCELKADVVAADEREESGARALLNLGHTYGHAIEAEMGYGVWLHGEAVAAGMVMAAQTSRRLGQLSVSDVERIKKLLLRAGLPVCGPKEMAPESYLPHMMRDKKVLAGELRLVLPTAIGKSEIRGGVAHDMVLASIADCRP</sequence>
<keyword id="KW-0028">Amino-acid biosynthesis</keyword>
<keyword id="KW-0057">Aromatic amino acid biosynthesis</keyword>
<keyword id="KW-0170">Cobalt</keyword>
<keyword id="KW-0963">Cytoplasm</keyword>
<keyword id="KW-0456">Lyase</keyword>
<keyword id="KW-0479">Metal-binding</keyword>
<keyword id="KW-0520">NAD</keyword>
<keyword id="KW-0547">Nucleotide-binding</keyword>
<keyword id="KW-0862">Zinc</keyword>
<accession>Q664M0</accession>
<reference key="1">
    <citation type="journal article" date="2004" name="Proc. Natl. Acad. Sci. U.S.A.">
        <title>Insights into the evolution of Yersinia pestis through whole-genome comparison with Yersinia pseudotuberculosis.</title>
        <authorList>
            <person name="Chain P.S.G."/>
            <person name="Carniel E."/>
            <person name="Larimer F.W."/>
            <person name="Lamerdin J."/>
            <person name="Stoutland P.O."/>
            <person name="Regala W.M."/>
            <person name="Georgescu A.M."/>
            <person name="Vergez L.M."/>
            <person name="Land M.L."/>
            <person name="Motin V.L."/>
            <person name="Brubaker R.R."/>
            <person name="Fowler J."/>
            <person name="Hinnebusch J."/>
            <person name="Marceau M."/>
            <person name="Medigue C."/>
            <person name="Simonet M."/>
            <person name="Chenal-Francisque V."/>
            <person name="Souza B."/>
            <person name="Dacheux D."/>
            <person name="Elliott J.M."/>
            <person name="Derbise A."/>
            <person name="Hauser L.J."/>
            <person name="Garcia E."/>
        </authorList>
    </citation>
    <scope>NUCLEOTIDE SEQUENCE [LARGE SCALE GENOMIC DNA]</scope>
    <source>
        <strain>IP32953</strain>
    </source>
</reference>